<dbReference type="EC" id="7.1.1.-" evidence="1"/>
<dbReference type="EMBL" id="CP000768">
    <property type="protein sequence ID" value="ABS44397.1"/>
    <property type="molecule type" value="Genomic_DNA"/>
</dbReference>
<dbReference type="SMR" id="A7H5S4"/>
<dbReference type="KEGG" id="cjd:JJD26997_1923"/>
<dbReference type="HOGENOM" id="CLU_015134_0_1_7"/>
<dbReference type="Proteomes" id="UP000002302">
    <property type="component" value="Chromosome"/>
</dbReference>
<dbReference type="GO" id="GO:0005886">
    <property type="term" value="C:plasma membrane"/>
    <property type="evidence" value="ECO:0007669"/>
    <property type="project" value="UniProtKB-SubCell"/>
</dbReference>
<dbReference type="GO" id="GO:0003954">
    <property type="term" value="F:NADH dehydrogenase activity"/>
    <property type="evidence" value="ECO:0007669"/>
    <property type="project" value="TreeGrafter"/>
</dbReference>
<dbReference type="GO" id="GO:0016655">
    <property type="term" value="F:oxidoreductase activity, acting on NAD(P)H, quinone or similar compound as acceptor"/>
    <property type="evidence" value="ECO:0007669"/>
    <property type="project" value="UniProtKB-UniRule"/>
</dbReference>
<dbReference type="GO" id="GO:0048038">
    <property type="term" value="F:quinone binding"/>
    <property type="evidence" value="ECO:0007669"/>
    <property type="project" value="UniProtKB-KW"/>
</dbReference>
<dbReference type="GO" id="GO:0009060">
    <property type="term" value="P:aerobic respiration"/>
    <property type="evidence" value="ECO:0007669"/>
    <property type="project" value="TreeGrafter"/>
</dbReference>
<dbReference type="HAMAP" id="MF_01350">
    <property type="entry name" value="NDH1_NuoH"/>
    <property type="match status" value="1"/>
</dbReference>
<dbReference type="InterPro" id="IPR001694">
    <property type="entry name" value="NADH_UbQ_OxRdtase_su1/FPO"/>
</dbReference>
<dbReference type="InterPro" id="IPR018086">
    <property type="entry name" value="NADH_UbQ_OxRdtase_su1_CS"/>
</dbReference>
<dbReference type="NCBIfam" id="NF004741">
    <property type="entry name" value="PRK06076.1-2"/>
    <property type="match status" value="1"/>
</dbReference>
<dbReference type="PANTHER" id="PTHR11432">
    <property type="entry name" value="NADH DEHYDROGENASE SUBUNIT 1"/>
    <property type="match status" value="1"/>
</dbReference>
<dbReference type="PANTHER" id="PTHR11432:SF3">
    <property type="entry name" value="NADH-UBIQUINONE OXIDOREDUCTASE CHAIN 1"/>
    <property type="match status" value="1"/>
</dbReference>
<dbReference type="Pfam" id="PF00146">
    <property type="entry name" value="NADHdh"/>
    <property type="match status" value="1"/>
</dbReference>
<dbReference type="PROSITE" id="PS00667">
    <property type="entry name" value="COMPLEX1_ND1_1"/>
    <property type="match status" value="1"/>
</dbReference>
<sequence length="332" mass="36543">MSDFAFFALEALIKCIIIIAIFASLAGLATYAERKVLAYFQRRIGPDMVGPFGLIQLVADMIKLFTKEDIIPSNSQKFIFAIAPLISAICAFVSLAAIPMLPEFTLFGRVIQPIVADINVALLFVIGTSGLCFYAVFLGGLASNNKWSILGAARGLVAIISYESVGALALIAIVMLVGSFSLVDINNYQSDGFFSWLIFKQPLAFVLFIIALFIETNRTPLCLTENDAEIVAGYGTEYSGLRWGMFFIGEYASMIAGAILVTLLFLGGFNGFWIIPGWIMMIVKSSFIFFWYFWARAAFPQLRPDQVMKMCYLILIPLAVVNLLITALAVLL</sequence>
<proteinExistence type="inferred from homology"/>
<gene>
    <name evidence="1" type="primary">nuoH</name>
    <name type="ordered locus">JJD26997_1923</name>
</gene>
<feature type="chain" id="PRO_1000067739" description="NADH-quinone oxidoreductase subunit H">
    <location>
        <begin position="1"/>
        <end position="332"/>
    </location>
</feature>
<feature type="transmembrane region" description="Helical" evidence="1">
    <location>
        <begin position="4"/>
        <end position="24"/>
    </location>
</feature>
<feature type="transmembrane region" description="Helical" evidence="1">
    <location>
        <begin position="44"/>
        <end position="64"/>
    </location>
</feature>
<feature type="transmembrane region" description="Helical" evidence="1">
    <location>
        <begin position="78"/>
        <end position="98"/>
    </location>
</feature>
<feature type="transmembrane region" description="Helical" evidence="1">
    <location>
        <begin position="120"/>
        <end position="140"/>
    </location>
</feature>
<feature type="transmembrane region" description="Helical" evidence="1">
    <location>
        <begin position="165"/>
        <end position="185"/>
    </location>
</feature>
<feature type="transmembrane region" description="Helical" evidence="1">
    <location>
        <begin position="194"/>
        <end position="214"/>
    </location>
</feature>
<feature type="transmembrane region" description="Helical" evidence="1">
    <location>
        <begin position="255"/>
        <end position="275"/>
    </location>
</feature>
<feature type="transmembrane region" description="Helical" evidence="1">
    <location>
        <begin position="279"/>
        <end position="299"/>
    </location>
</feature>
<feature type="transmembrane region" description="Helical" evidence="1">
    <location>
        <begin position="312"/>
        <end position="332"/>
    </location>
</feature>
<accession>A7H5S4</accession>
<name>NUOH_CAMJD</name>
<protein>
    <recommendedName>
        <fullName evidence="1">NADH-quinone oxidoreductase subunit H</fullName>
        <ecNumber evidence="1">7.1.1.-</ecNumber>
    </recommendedName>
    <alternativeName>
        <fullName evidence="1">NADH dehydrogenase I subunit H</fullName>
    </alternativeName>
    <alternativeName>
        <fullName evidence="1">NDH-1 subunit H</fullName>
    </alternativeName>
</protein>
<evidence type="ECO:0000255" key="1">
    <source>
        <dbReference type="HAMAP-Rule" id="MF_01350"/>
    </source>
</evidence>
<organism>
    <name type="scientific">Campylobacter jejuni subsp. doylei (strain ATCC BAA-1458 / RM4099 / 269.97)</name>
    <dbReference type="NCBI Taxonomy" id="360109"/>
    <lineage>
        <taxon>Bacteria</taxon>
        <taxon>Pseudomonadati</taxon>
        <taxon>Campylobacterota</taxon>
        <taxon>Epsilonproteobacteria</taxon>
        <taxon>Campylobacterales</taxon>
        <taxon>Campylobacteraceae</taxon>
        <taxon>Campylobacter</taxon>
    </lineage>
</organism>
<comment type="function">
    <text evidence="1">NDH-1 shuttles electrons from NADH, via FMN and iron-sulfur (Fe-S) centers, to quinones in the respiratory chain. The immediate electron acceptor for the enzyme in this species is believed to be ubiquinone. Couples the redox reaction to proton translocation (for every two electrons transferred, four hydrogen ions are translocated across the cytoplasmic membrane), and thus conserves the redox energy in a proton gradient. This subunit may bind ubiquinone.</text>
</comment>
<comment type="catalytic activity">
    <reaction evidence="1">
        <text>a quinone + NADH + 5 H(+)(in) = a quinol + NAD(+) + 4 H(+)(out)</text>
        <dbReference type="Rhea" id="RHEA:57888"/>
        <dbReference type="ChEBI" id="CHEBI:15378"/>
        <dbReference type="ChEBI" id="CHEBI:24646"/>
        <dbReference type="ChEBI" id="CHEBI:57540"/>
        <dbReference type="ChEBI" id="CHEBI:57945"/>
        <dbReference type="ChEBI" id="CHEBI:132124"/>
    </reaction>
</comment>
<comment type="subunit">
    <text evidence="1">NDH-1 is composed of 14 different subunits. Subunits NuoA, H, J, K, L, M, N constitute the membrane sector of the complex.</text>
</comment>
<comment type="subcellular location">
    <subcellularLocation>
        <location evidence="1">Cell inner membrane</location>
        <topology evidence="1">Multi-pass membrane protein</topology>
    </subcellularLocation>
</comment>
<comment type="similarity">
    <text evidence="1">Belongs to the complex I subunit 1 family.</text>
</comment>
<reference key="1">
    <citation type="submission" date="2007-07" db="EMBL/GenBank/DDBJ databases">
        <title>Complete genome sequence of Campylobacter jejuni subsp doylei 269.97 isolated from human blood.</title>
        <authorList>
            <person name="Fouts D.E."/>
            <person name="Mongodin E.F."/>
            <person name="Puiu D."/>
            <person name="Sebastian Y."/>
            <person name="Miller W.G."/>
            <person name="Mandrell R.E."/>
            <person name="Lastovica A.J."/>
            <person name="Nelson K.E."/>
        </authorList>
    </citation>
    <scope>NUCLEOTIDE SEQUENCE [LARGE SCALE GENOMIC DNA]</scope>
    <source>
        <strain>ATCC BAA-1458 / RM4099 / 269.97</strain>
    </source>
</reference>
<keyword id="KW-0997">Cell inner membrane</keyword>
<keyword id="KW-1003">Cell membrane</keyword>
<keyword id="KW-0472">Membrane</keyword>
<keyword id="KW-0520">NAD</keyword>
<keyword id="KW-0874">Quinone</keyword>
<keyword id="KW-1278">Translocase</keyword>
<keyword id="KW-0812">Transmembrane</keyword>
<keyword id="KW-1133">Transmembrane helix</keyword>
<keyword id="KW-0830">Ubiquinone</keyword>